<organism>
    <name type="scientific">Rhodospirillum centenum (strain ATCC 51521 / SW)</name>
    <dbReference type="NCBI Taxonomy" id="414684"/>
    <lineage>
        <taxon>Bacteria</taxon>
        <taxon>Pseudomonadati</taxon>
        <taxon>Pseudomonadota</taxon>
        <taxon>Alphaproteobacteria</taxon>
        <taxon>Rhodospirillales</taxon>
        <taxon>Rhodospirillaceae</taxon>
        <taxon>Rhodospirillum</taxon>
    </lineage>
</organism>
<comment type="function">
    <text evidence="1">One of the primary rRNA binding proteins, it binds directly to 16S rRNA central domain where it helps coordinate assembly of the platform of the 30S subunit.</text>
</comment>
<comment type="subunit">
    <text evidence="1">Part of the 30S ribosomal subunit. Contacts proteins S5 and S12.</text>
</comment>
<comment type="similarity">
    <text evidence="1">Belongs to the universal ribosomal protein uS8 family.</text>
</comment>
<accession>B6IRS0</accession>
<gene>
    <name evidence="1" type="primary">rpsH</name>
    <name type="ordered locus">RC1_0725</name>
</gene>
<evidence type="ECO:0000255" key="1">
    <source>
        <dbReference type="HAMAP-Rule" id="MF_01302"/>
    </source>
</evidence>
<evidence type="ECO:0000305" key="2"/>
<name>RS8_RHOCS</name>
<reference key="1">
    <citation type="submission" date="2007-03" db="EMBL/GenBank/DDBJ databases">
        <title>Genome sequence of Rhodospirillum centenum.</title>
        <authorList>
            <person name="Touchman J.W."/>
            <person name="Bauer C."/>
            <person name="Blankenship R.E."/>
        </authorList>
    </citation>
    <scope>NUCLEOTIDE SEQUENCE [LARGE SCALE GENOMIC DNA]</scope>
    <source>
        <strain>ATCC 51521 / SW</strain>
    </source>
</reference>
<keyword id="KW-1185">Reference proteome</keyword>
<keyword id="KW-0687">Ribonucleoprotein</keyword>
<keyword id="KW-0689">Ribosomal protein</keyword>
<keyword id="KW-0694">RNA-binding</keyword>
<keyword id="KW-0699">rRNA-binding</keyword>
<protein>
    <recommendedName>
        <fullName evidence="1">Small ribosomal subunit protein uS8</fullName>
    </recommendedName>
    <alternativeName>
        <fullName evidence="2">30S ribosomal protein S8</fullName>
    </alternativeName>
</protein>
<sequence>MNLSDPLGDMLTRIRNGQKARMSVITSPASKLRTNVLEVLKREGYIRGYNVEDVRPGVRNLRIELKYHEGEPVIKEIHRVSKPGRRIYSKIADLPRVYNGLGIAILSTPRGVMSDAEARAANVGGEVLCKVF</sequence>
<dbReference type="EMBL" id="CP000613">
    <property type="protein sequence ID" value="ACI98156.1"/>
    <property type="molecule type" value="Genomic_DNA"/>
</dbReference>
<dbReference type="RefSeq" id="WP_012565947.1">
    <property type="nucleotide sequence ID" value="NC_011420.2"/>
</dbReference>
<dbReference type="SMR" id="B6IRS0"/>
<dbReference type="STRING" id="414684.RC1_0725"/>
<dbReference type="KEGG" id="rce:RC1_0725"/>
<dbReference type="eggNOG" id="COG0096">
    <property type="taxonomic scope" value="Bacteria"/>
</dbReference>
<dbReference type="HOGENOM" id="CLU_098428_0_0_5"/>
<dbReference type="OrthoDB" id="9802617at2"/>
<dbReference type="Proteomes" id="UP000001591">
    <property type="component" value="Chromosome"/>
</dbReference>
<dbReference type="GO" id="GO:1990904">
    <property type="term" value="C:ribonucleoprotein complex"/>
    <property type="evidence" value="ECO:0007669"/>
    <property type="project" value="UniProtKB-KW"/>
</dbReference>
<dbReference type="GO" id="GO:0005840">
    <property type="term" value="C:ribosome"/>
    <property type="evidence" value="ECO:0007669"/>
    <property type="project" value="UniProtKB-KW"/>
</dbReference>
<dbReference type="GO" id="GO:0019843">
    <property type="term" value="F:rRNA binding"/>
    <property type="evidence" value="ECO:0007669"/>
    <property type="project" value="UniProtKB-UniRule"/>
</dbReference>
<dbReference type="GO" id="GO:0003735">
    <property type="term" value="F:structural constituent of ribosome"/>
    <property type="evidence" value="ECO:0007669"/>
    <property type="project" value="InterPro"/>
</dbReference>
<dbReference type="GO" id="GO:0006412">
    <property type="term" value="P:translation"/>
    <property type="evidence" value="ECO:0007669"/>
    <property type="project" value="UniProtKB-UniRule"/>
</dbReference>
<dbReference type="FunFam" id="3.30.1370.30:FF:000002">
    <property type="entry name" value="30S ribosomal protein S8"/>
    <property type="match status" value="1"/>
</dbReference>
<dbReference type="FunFam" id="3.30.1490.10:FF:000001">
    <property type="entry name" value="30S ribosomal protein S8"/>
    <property type="match status" value="1"/>
</dbReference>
<dbReference type="Gene3D" id="3.30.1370.30">
    <property type="match status" value="1"/>
</dbReference>
<dbReference type="Gene3D" id="3.30.1490.10">
    <property type="match status" value="1"/>
</dbReference>
<dbReference type="HAMAP" id="MF_01302_B">
    <property type="entry name" value="Ribosomal_uS8_B"/>
    <property type="match status" value="1"/>
</dbReference>
<dbReference type="InterPro" id="IPR000630">
    <property type="entry name" value="Ribosomal_uS8"/>
</dbReference>
<dbReference type="InterPro" id="IPR047863">
    <property type="entry name" value="Ribosomal_uS8_CS"/>
</dbReference>
<dbReference type="InterPro" id="IPR035987">
    <property type="entry name" value="Ribosomal_uS8_sf"/>
</dbReference>
<dbReference type="NCBIfam" id="NF001109">
    <property type="entry name" value="PRK00136.1"/>
    <property type="match status" value="1"/>
</dbReference>
<dbReference type="PANTHER" id="PTHR11758">
    <property type="entry name" value="40S RIBOSOMAL PROTEIN S15A"/>
    <property type="match status" value="1"/>
</dbReference>
<dbReference type="Pfam" id="PF00410">
    <property type="entry name" value="Ribosomal_S8"/>
    <property type="match status" value="1"/>
</dbReference>
<dbReference type="SUPFAM" id="SSF56047">
    <property type="entry name" value="Ribosomal protein S8"/>
    <property type="match status" value="1"/>
</dbReference>
<dbReference type="PROSITE" id="PS00053">
    <property type="entry name" value="RIBOSOMAL_S8"/>
    <property type="match status" value="1"/>
</dbReference>
<proteinExistence type="inferred from homology"/>
<feature type="chain" id="PRO_1000140602" description="Small ribosomal subunit protein uS8">
    <location>
        <begin position="1"/>
        <end position="132"/>
    </location>
</feature>